<comment type="function">
    <text evidence="1">This protein is an aporepressor. When complexed with L-tryptophan it binds the operator region of the trp operon (5'-ACTAGT-'3') and prevents the initiation of transcription. The complex also regulates trp repressor biosynthesis by binding to its regulatory region.</text>
</comment>
<comment type="subunit">
    <text evidence="1">Homodimer.</text>
</comment>
<comment type="subcellular location">
    <subcellularLocation>
        <location evidence="1">Cytoplasm</location>
    </subcellularLocation>
</comment>
<comment type="similarity">
    <text evidence="1">Belongs to the TrpR family.</text>
</comment>
<gene>
    <name evidence="1" type="primary">trpR</name>
    <name type="ordered locus">ECSE_4669</name>
</gene>
<protein>
    <recommendedName>
        <fullName evidence="1">Trp operon repressor</fullName>
    </recommendedName>
</protein>
<proteinExistence type="inferred from homology"/>
<organism>
    <name type="scientific">Escherichia coli (strain SE11)</name>
    <dbReference type="NCBI Taxonomy" id="409438"/>
    <lineage>
        <taxon>Bacteria</taxon>
        <taxon>Pseudomonadati</taxon>
        <taxon>Pseudomonadota</taxon>
        <taxon>Gammaproteobacteria</taxon>
        <taxon>Enterobacterales</taxon>
        <taxon>Enterobacteriaceae</taxon>
        <taxon>Escherichia</taxon>
    </lineage>
</organism>
<feature type="chain" id="PRO_1000197142" description="Trp operon repressor">
    <location>
        <begin position="1"/>
        <end position="108"/>
    </location>
</feature>
<feature type="DNA-binding region" evidence="1">
    <location>
        <begin position="68"/>
        <end position="91"/>
    </location>
</feature>
<reference key="1">
    <citation type="journal article" date="2008" name="DNA Res.">
        <title>Complete genome sequence and comparative analysis of the wild-type commensal Escherichia coli strain SE11 isolated from a healthy adult.</title>
        <authorList>
            <person name="Oshima K."/>
            <person name="Toh H."/>
            <person name="Ogura Y."/>
            <person name="Sasamoto H."/>
            <person name="Morita H."/>
            <person name="Park S.-H."/>
            <person name="Ooka T."/>
            <person name="Iyoda S."/>
            <person name="Taylor T.D."/>
            <person name="Hayashi T."/>
            <person name="Itoh K."/>
            <person name="Hattori M."/>
        </authorList>
    </citation>
    <scope>NUCLEOTIDE SEQUENCE [LARGE SCALE GENOMIC DNA]</scope>
    <source>
        <strain>SE11</strain>
    </source>
</reference>
<accession>B6I6P1</accession>
<name>TRPR_ECOSE</name>
<keyword id="KW-0963">Cytoplasm</keyword>
<keyword id="KW-0238">DNA-binding</keyword>
<keyword id="KW-0678">Repressor</keyword>
<keyword id="KW-0804">Transcription</keyword>
<keyword id="KW-0805">Transcription regulation</keyword>
<sequence length="108" mass="12355">MAQQSPYSAAMAEQRHQEWLRFVDLLKNAYQNDLHLPLLNLMLTPDEREALGTRVRIVEELLRGEMSQRELKNELGAGIATITRGSNSLKAAPVELRQWLEEVLLKSD</sequence>
<evidence type="ECO:0000255" key="1">
    <source>
        <dbReference type="HAMAP-Rule" id="MF_00475"/>
    </source>
</evidence>
<dbReference type="EMBL" id="AP009240">
    <property type="protein sequence ID" value="BAG80193.1"/>
    <property type="molecule type" value="Genomic_DNA"/>
</dbReference>
<dbReference type="RefSeq" id="WP_000068679.1">
    <property type="nucleotide sequence ID" value="NC_011415.1"/>
</dbReference>
<dbReference type="SMR" id="B6I6P1"/>
<dbReference type="GeneID" id="93777452"/>
<dbReference type="KEGG" id="ecy:ECSE_4669"/>
<dbReference type="HOGENOM" id="CLU_147939_0_0_6"/>
<dbReference type="Proteomes" id="UP000008199">
    <property type="component" value="Chromosome"/>
</dbReference>
<dbReference type="GO" id="GO:0005737">
    <property type="term" value="C:cytoplasm"/>
    <property type="evidence" value="ECO:0007669"/>
    <property type="project" value="UniProtKB-SubCell"/>
</dbReference>
<dbReference type="GO" id="GO:0003700">
    <property type="term" value="F:DNA-binding transcription factor activity"/>
    <property type="evidence" value="ECO:0007669"/>
    <property type="project" value="InterPro"/>
</dbReference>
<dbReference type="GO" id="GO:0043565">
    <property type="term" value="F:sequence-specific DNA binding"/>
    <property type="evidence" value="ECO:0007669"/>
    <property type="project" value="InterPro"/>
</dbReference>
<dbReference type="GO" id="GO:0045892">
    <property type="term" value="P:negative regulation of DNA-templated transcription"/>
    <property type="evidence" value="ECO:0007669"/>
    <property type="project" value="UniProtKB-UniRule"/>
</dbReference>
<dbReference type="FunFam" id="1.10.1270.10:FF:000001">
    <property type="entry name" value="Trp operon repressor"/>
    <property type="match status" value="1"/>
</dbReference>
<dbReference type="Gene3D" id="1.10.1270.10">
    <property type="entry name" value="TrpR-like"/>
    <property type="match status" value="1"/>
</dbReference>
<dbReference type="HAMAP" id="MF_00475">
    <property type="entry name" value="Trp_repressor"/>
    <property type="match status" value="1"/>
</dbReference>
<dbReference type="InterPro" id="IPR000831">
    <property type="entry name" value="Trp_repress"/>
</dbReference>
<dbReference type="InterPro" id="IPR013335">
    <property type="entry name" value="Trp_repress_bac"/>
</dbReference>
<dbReference type="InterPro" id="IPR010921">
    <property type="entry name" value="Trp_repressor/repl_initiator"/>
</dbReference>
<dbReference type="InterPro" id="IPR038116">
    <property type="entry name" value="TrpR-like_sf"/>
</dbReference>
<dbReference type="NCBIfam" id="TIGR01321">
    <property type="entry name" value="TrpR"/>
    <property type="match status" value="1"/>
</dbReference>
<dbReference type="PANTHER" id="PTHR38025">
    <property type="entry name" value="TRP OPERON REPRESSOR"/>
    <property type="match status" value="1"/>
</dbReference>
<dbReference type="PANTHER" id="PTHR38025:SF1">
    <property type="entry name" value="TRP OPERON REPRESSOR"/>
    <property type="match status" value="1"/>
</dbReference>
<dbReference type="Pfam" id="PF01371">
    <property type="entry name" value="Trp_repressor"/>
    <property type="match status" value="1"/>
</dbReference>
<dbReference type="PIRSF" id="PIRSF003196">
    <property type="entry name" value="Trp_repressor"/>
    <property type="match status" value="1"/>
</dbReference>
<dbReference type="SUPFAM" id="SSF48295">
    <property type="entry name" value="TrpR-like"/>
    <property type="match status" value="1"/>
</dbReference>